<reference key="1">
    <citation type="journal article" date="2005" name="Proc. Natl. Acad. Sci. U.S.A.">
        <title>Comparison of the complete genome sequences of Pseudomonas syringae pv. syringae B728a and pv. tomato DC3000.</title>
        <authorList>
            <person name="Feil H."/>
            <person name="Feil W.S."/>
            <person name="Chain P."/>
            <person name="Larimer F."/>
            <person name="Dibartolo G."/>
            <person name="Copeland A."/>
            <person name="Lykidis A."/>
            <person name="Trong S."/>
            <person name="Nolan M."/>
            <person name="Goltsman E."/>
            <person name="Thiel J."/>
            <person name="Malfatti S."/>
            <person name="Loper J.E."/>
            <person name="Lapidus A."/>
            <person name="Detter J.C."/>
            <person name="Land M."/>
            <person name="Richardson P.M."/>
            <person name="Kyrpides N.C."/>
            <person name="Ivanova N."/>
            <person name="Lindow S.E."/>
        </authorList>
    </citation>
    <scope>NUCLEOTIDE SEQUENCE [LARGE SCALE GENOMIC DNA]</scope>
    <source>
        <strain>B728a</strain>
    </source>
</reference>
<dbReference type="EC" id="3.6.4.-" evidence="1"/>
<dbReference type="EMBL" id="CP000075">
    <property type="protein sequence ID" value="AAY38872.1"/>
    <property type="molecule type" value="Genomic_DNA"/>
</dbReference>
<dbReference type="RefSeq" id="WP_011268689.1">
    <property type="nucleotide sequence ID" value="NC_007005.1"/>
</dbReference>
<dbReference type="RefSeq" id="YP_236910.1">
    <property type="nucleotide sequence ID" value="NC_007005.1"/>
</dbReference>
<dbReference type="SMR" id="Q4ZPQ0"/>
<dbReference type="STRING" id="205918.Psyr_3842"/>
<dbReference type="KEGG" id="psb:Psyr_3842"/>
<dbReference type="PATRIC" id="fig|205918.7.peg.3948"/>
<dbReference type="eggNOG" id="COG0553">
    <property type="taxonomic scope" value="Bacteria"/>
</dbReference>
<dbReference type="HOGENOM" id="CLU_011520_0_0_6"/>
<dbReference type="OrthoDB" id="9814088at2"/>
<dbReference type="Proteomes" id="UP000000426">
    <property type="component" value="Chromosome"/>
</dbReference>
<dbReference type="GO" id="GO:0005524">
    <property type="term" value="F:ATP binding"/>
    <property type="evidence" value="ECO:0007669"/>
    <property type="project" value="UniProtKB-UniRule"/>
</dbReference>
<dbReference type="GO" id="GO:0003677">
    <property type="term" value="F:DNA binding"/>
    <property type="evidence" value="ECO:0007669"/>
    <property type="project" value="UniProtKB-KW"/>
</dbReference>
<dbReference type="GO" id="GO:0004386">
    <property type="term" value="F:helicase activity"/>
    <property type="evidence" value="ECO:0007669"/>
    <property type="project" value="UniProtKB-UniRule"/>
</dbReference>
<dbReference type="GO" id="GO:0016817">
    <property type="term" value="F:hydrolase activity, acting on acid anhydrides"/>
    <property type="evidence" value="ECO:0007669"/>
    <property type="project" value="InterPro"/>
</dbReference>
<dbReference type="GO" id="GO:0006355">
    <property type="term" value="P:regulation of DNA-templated transcription"/>
    <property type="evidence" value="ECO:0007669"/>
    <property type="project" value="UniProtKB-UniRule"/>
</dbReference>
<dbReference type="CDD" id="cd18011">
    <property type="entry name" value="DEXDc_RapA"/>
    <property type="match status" value="1"/>
</dbReference>
<dbReference type="CDD" id="cd18793">
    <property type="entry name" value="SF2_C_SNF"/>
    <property type="match status" value="1"/>
</dbReference>
<dbReference type="Gene3D" id="2.30.30.140">
    <property type="match status" value="1"/>
</dbReference>
<dbReference type="Gene3D" id="2.30.30.930">
    <property type="match status" value="1"/>
</dbReference>
<dbReference type="Gene3D" id="3.30.360.80">
    <property type="match status" value="1"/>
</dbReference>
<dbReference type="Gene3D" id="6.10.140.1500">
    <property type="match status" value="1"/>
</dbReference>
<dbReference type="Gene3D" id="6.10.140.2230">
    <property type="match status" value="1"/>
</dbReference>
<dbReference type="Gene3D" id="3.40.50.300">
    <property type="entry name" value="P-loop containing nucleotide triphosphate hydrolases"/>
    <property type="match status" value="1"/>
</dbReference>
<dbReference type="Gene3D" id="3.40.50.10810">
    <property type="entry name" value="Tandem AAA-ATPase domain"/>
    <property type="match status" value="1"/>
</dbReference>
<dbReference type="HAMAP" id="MF_01821">
    <property type="entry name" value="Helicase_RapA"/>
    <property type="match status" value="1"/>
</dbReference>
<dbReference type="InterPro" id="IPR014001">
    <property type="entry name" value="Helicase_ATP-bd"/>
</dbReference>
<dbReference type="InterPro" id="IPR001650">
    <property type="entry name" value="Helicase_C-like"/>
</dbReference>
<dbReference type="InterPro" id="IPR023949">
    <property type="entry name" value="Helicase_RapA"/>
</dbReference>
<dbReference type="InterPro" id="IPR027417">
    <property type="entry name" value="P-loop_NTPase"/>
</dbReference>
<dbReference type="InterPro" id="IPR022737">
    <property type="entry name" value="RapA_C"/>
</dbReference>
<dbReference type="InterPro" id="IPR038718">
    <property type="entry name" value="SNF2-like_sf"/>
</dbReference>
<dbReference type="InterPro" id="IPR049730">
    <property type="entry name" value="SNF2/RAD54-like_C"/>
</dbReference>
<dbReference type="InterPro" id="IPR000330">
    <property type="entry name" value="SNF2_N"/>
</dbReference>
<dbReference type="InterPro" id="IPR040765">
    <property type="entry name" value="Tudor_1_RapA"/>
</dbReference>
<dbReference type="InterPro" id="IPR040766">
    <property type="entry name" value="Tudor_2_RapA"/>
</dbReference>
<dbReference type="NCBIfam" id="NF003426">
    <property type="entry name" value="PRK04914.1"/>
    <property type="match status" value="1"/>
</dbReference>
<dbReference type="PANTHER" id="PTHR45766">
    <property type="entry name" value="DNA ANNEALING HELICASE AND ENDONUCLEASE ZRANB3 FAMILY MEMBER"/>
    <property type="match status" value="1"/>
</dbReference>
<dbReference type="PANTHER" id="PTHR45766:SF6">
    <property type="entry name" value="SWI_SNF-RELATED MATRIX-ASSOCIATED ACTIN-DEPENDENT REGULATOR OF CHROMATIN SUBFAMILY A-LIKE PROTEIN 1"/>
    <property type="match status" value="1"/>
</dbReference>
<dbReference type="Pfam" id="PF00271">
    <property type="entry name" value="Helicase_C"/>
    <property type="match status" value="1"/>
</dbReference>
<dbReference type="Pfam" id="PF12137">
    <property type="entry name" value="RapA_C"/>
    <property type="match status" value="1"/>
</dbReference>
<dbReference type="Pfam" id="PF00176">
    <property type="entry name" value="SNF2-rel_dom"/>
    <property type="match status" value="1"/>
</dbReference>
<dbReference type="Pfam" id="PF18339">
    <property type="entry name" value="Tudor_1_RapA"/>
    <property type="match status" value="1"/>
</dbReference>
<dbReference type="Pfam" id="PF18337">
    <property type="entry name" value="Tudor_RapA"/>
    <property type="match status" value="1"/>
</dbReference>
<dbReference type="SMART" id="SM00487">
    <property type="entry name" value="DEXDc"/>
    <property type="match status" value="1"/>
</dbReference>
<dbReference type="SMART" id="SM00490">
    <property type="entry name" value="HELICc"/>
    <property type="match status" value="1"/>
</dbReference>
<dbReference type="SUPFAM" id="SSF52540">
    <property type="entry name" value="P-loop containing nucleoside triphosphate hydrolases"/>
    <property type="match status" value="2"/>
</dbReference>
<dbReference type="PROSITE" id="PS51192">
    <property type="entry name" value="HELICASE_ATP_BIND_1"/>
    <property type="match status" value="1"/>
</dbReference>
<dbReference type="PROSITE" id="PS51194">
    <property type="entry name" value="HELICASE_CTER"/>
    <property type="match status" value="1"/>
</dbReference>
<accession>Q4ZPQ0</accession>
<organism>
    <name type="scientific">Pseudomonas syringae pv. syringae (strain B728a)</name>
    <dbReference type="NCBI Taxonomy" id="205918"/>
    <lineage>
        <taxon>Bacteria</taxon>
        <taxon>Pseudomonadati</taxon>
        <taxon>Pseudomonadota</taxon>
        <taxon>Gammaproteobacteria</taxon>
        <taxon>Pseudomonadales</taxon>
        <taxon>Pseudomonadaceae</taxon>
        <taxon>Pseudomonas</taxon>
        <taxon>Pseudomonas syringae</taxon>
    </lineage>
</organism>
<feature type="chain" id="PRO_1000088370" description="RNA polymerase-associated protein RapA">
    <location>
        <begin position="1"/>
        <end position="948"/>
    </location>
</feature>
<feature type="domain" description="Helicase ATP-binding" evidence="1">
    <location>
        <begin position="164"/>
        <end position="332"/>
    </location>
</feature>
<feature type="domain" description="Helicase C-terminal" evidence="1">
    <location>
        <begin position="473"/>
        <end position="627"/>
    </location>
</feature>
<feature type="short sequence motif" description="DEAH box">
    <location>
        <begin position="278"/>
        <end position="281"/>
    </location>
</feature>
<feature type="binding site" evidence="1">
    <location>
        <begin position="177"/>
        <end position="184"/>
    </location>
    <ligand>
        <name>ATP</name>
        <dbReference type="ChEBI" id="CHEBI:30616"/>
    </ligand>
</feature>
<keyword id="KW-0010">Activator</keyword>
<keyword id="KW-0067">ATP-binding</keyword>
<keyword id="KW-0238">DNA-binding</keyword>
<keyword id="KW-0347">Helicase</keyword>
<keyword id="KW-0378">Hydrolase</keyword>
<keyword id="KW-0547">Nucleotide-binding</keyword>
<keyword id="KW-0804">Transcription</keyword>
<keyword id="KW-0805">Transcription regulation</keyword>
<protein>
    <recommendedName>
        <fullName evidence="1">RNA polymerase-associated protein RapA</fullName>
        <ecNumber evidence="1">3.6.4.-</ecNumber>
    </recommendedName>
    <alternativeName>
        <fullName evidence="1">ATP-dependent helicase HepA</fullName>
    </alternativeName>
</protein>
<sequence length="948" mass="106664">MAQQYQPGQRWISDSEAELGLGTVLAQDGRLLTVLYPATGETRQYALRNAPLTRVRFSPGDVITHFENWKMTVREVDDVDGLLVYHGLNAQNELVTLPETQLSNFIQFRLATDRLFAGQIDQLSWFSLRYNTLEHTSRQLQSSLWGLGGVRAQPIAHQLHIAREVADRIAPRVLLADEVGLGKTIEAGLVIHRQLLSGRASRVLILVPENLQHQWLVEMRRRFNLQVALFDAERFMESDAGNPFEDTQLALVALEWLVEDEKAQDALFAAGWDLMVVDEAHHLVWHEDKASREYSLVEQLAEVIAGVLLLTATPEQLGQDSHFARLRLLDPNRFHDLKAFRAESENYRPVAQAVQELLDKGKLSAAAQETIHGFLGAEGDSLLAAVNTGDEEAKSRLIRELLDRHGTGRVLFRNTRAAVQGFPERKLHQYPLPCPVEYLELPVGEHADLYPEVSFQSHSDVSEEERWWRFDPRVDWLIDTLKMLKRVKVLVICAHAETAMDLEDALRVRSGIPATVFHEGMNILERDRAAAYFADEEFGAQVLICSEIGSEGRNFQFSHHLVLFDLPSHPDLLEQRIGRLDRIGQKHTIELHVPFLETSPQARLFQWYHEALNAFLNTCPTGNALQHQFGPRLLPLLESGDDDKWQTLINEARSERERLESELHTGRDRLLELNSGGAGEGEALVEAILDQDDQFSLPIYMETLFDAFGIDSEDHSENALILKPSEKMLDASFPLGDDEGVTITYDRNQALSREDMQFITWEHPMVQGGMDLVLSGSMGNTAVALIKNKALKPGTVLLELIYVSEVVAPRSLQLGRYLPPAALRCLLDPNGNDLASRVSFNTLNDQLESVPRASANKFIQAQRDQLTPRINAGEEKIMPKHAERVAEAQRRLAADTEEELARLTALQAVNPTVRDSELVALRTQREQGLAMLEKAALRLEAIRVLVAG</sequence>
<proteinExistence type="inferred from homology"/>
<gene>
    <name evidence="1" type="primary">rapA</name>
    <name type="ordered locus">Psyr_3842</name>
</gene>
<comment type="function">
    <text evidence="1">Transcription regulator that activates transcription by stimulating RNA polymerase (RNAP) recycling in case of stress conditions such as supercoiled DNA or high salt concentrations. Probably acts by releasing the RNAP, when it is trapped or immobilized on tightly supercoiled DNA. Does not activate transcription on linear DNA. Probably not involved in DNA repair.</text>
</comment>
<comment type="subunit">
    <text evidence="1">Interacts with the RNAP. Has a higher affinity for the core RNAP than for the holoenzyme. Its ATPase activity is stimulated by binding to RNAP.</text>
</comment>
<comment type="similarity">
    <text evidence="1">Belongs to the SNF2/RAD54 helicase family. RapA subfamily.</text>
</comment>
<evidence type="ECO:0000255" key="1">
    <source>
        <dbReference type="HAMAP-Rule" id="MF_01821"/>
    </source>
</evidence>
<name>RAPA_PSEU2</name>